<accession>Q5WWW5</accession>
<organism>
    <name type="scientific">Legionella pneumophila (strain Lens)</name>
    <dbReference type="NCBI Taxonomy" id="297245"/>
    <lineage>
        <taxon>Bacteria</taxon>
        <taxon>Pseudomonadati</taxon>
        <taxon>Pseudomonadota</taxon>
        <taxon>Gammaproteobacteria</taxon>
        <taxon>Legionellales</taxon>
        <taxon>Legionellaceae</taxon>
        <taxon>Legionella</taxon>
    </lineage>
</organism>
<dbReference type="EC" id="3.1.26.4" evidence="1"/>
<dbReference type="EMBL" id="CR628337">
    <property type="protein sequence ID" value="CAH15574.1"/>
    <property type="molecule type" value="Genomic_DNA"/>
</dbReference>
<dbReference type="RefSeq" id="WP_011215403.1">
    <property type="nucleotide sequence ID" value="NC_006369.1"/>
</dbReference>
<dbReference type="SMR" id="Q5WWW5"/>
<dbReference type="KEGG" id="lpf:lpl1334"/>
<dbReference type="LegioList" id="lpl1334"/>
<dbReference type="HOGENOM" id="CLU_030894_6_0_6"/>
<dbReference type="Proteomes" id="UP000002517">
    <property type="component" value="Chromosome"/>
</dbReference>
<dbReference type="GO" id="GO:0005737">
    <property type="term" value="C:cytoplasm"/>
    <property type="evidence" value="ECO:0007669"/>
    <property type="project" value="UniProtKB-SubCell"/>
</dbReference>
<dbReference type="GO" id="GO:0000287">
    <property type="term" value="F:magnesium ion binding"/>
    <property type="evidence" value="ECO:0007669"/>
    <property type="project" value="UniProtKB-UniRule"/>
</dbReference>
<dbReference type="GO" id="GO:0003676">
    <property type="term" value="F:nucleic acid binding"/>
    <property type="evidence" value="ECO:0007669"/>
    <property type="project" value="InterPro"/>
</dbReference>
<dbReference type="GO" id="GO:0004523">
    <property type="term" value="F:RNA-DNA hybrid ribonuclease activity"/>
    <property type="evidence" value="ECO:0007669"/>
    <property type="project" value="UniProtKB-UniRule"/>
</dbReference>
<dbReference type="GO" id="GO:0043137">
    <property type="term" value="P:DNA replication, removal of RNA primer"/>
    <property type="evidence" value="ECO:0007669"/>
    <property type="project" value="TreeGrafter"/>
</dbReference>
<dbReference type="CDD" id="cd09278">
    <property type="entry name" value="RNase_HI_prokaryote_like"/>
    <property type="match status" value="1"/>
</dbReference>
<dbReference type="FunFam" id="3.30.420.10:FF:000089">
    <property type="entry name" value="Ribonuclease H"/>
    <property type="match status" value="1"/>
</dbReference>
<dbReference type="Gene3D" id="3.30.420.10">
    <property type="entry name" value="Ribonuclease H-like superfamily/Ribonuclease H"/>
    <property type="match status" value="1"/>
</dbReference>
<dbReference type="HAMAP" id="MF_00042">
    <property type="entry name" value="RNase_H"/>
    <property type="match status" value="1"/>
</dbReference>
<dbReference type="InterPro" id="IPR050092">
    <property type="entry name" value="RNase_H"/>
</dbReference>
<dbReference type="InterPro" id="IPR012337">
    <property type="entry name" value="RNaseH-like_sf"/>
</dbReference>
<dbReference type="InterPro" id="IPR002156">
    <property type="entry name" value="RNaseH_domain"/>
</dbReference>
<dbReference type="InterPro" id="IPR036397">
    <property type="entry name" value="RNaseH_sf"/>
</dbReference>
<dbReference type="InterPro" id="IPR022892">
    <property type="entry name" value="RNaseHI"/>
</dbReference>
<dbReference type="NCBIfam" id="NF001236">
    <property type="entry name" value="PRK00203.1"/>
    <property type="match status" value="1"/>
</dbReference>
<dbReference type="PANTHER" id="PTHR10642">
    <property type="entry name" value="RIBONUCLEASE H1"/>
    <property type="match status" value="1"/>
</dbReference>
<dbReference type="PANTHER" id="PTHR10642:SF26">
    <property type="entry name" value="RIBONUCLEASE H1"/>
    <property type="match status" value="1"/>
</dbReference>
<dbReference type="Pfam" id="PF00075">
    <property type="entry name" value="RNase_H"/>
    <property type="match status" value="1"/>
</dbReference>
<dbReference type="SUPFAM" id="SSF53098">
    <property type="entry name" value="Ribonuclease H-like"/>
    <property type="match status" value="1"/>
</dbReference>
<dbReference type="PROSITE" id="PS50879">
    <property type="entry name" value="RNASE_H_1"/>
    <property type="match status" value="1"/>
</dbReference>
<keyword id="KW-0963">Cytoplasm</keyword>
<keyword id="KW-0255">Endonuclease</keyword>
<keyword id="KW-0378">Hydrolase</keyword>
<keyword id="KW-0460">Magnesium</keyword>
<keyword id="KW-0479">Metal-binding</keyword>
<keyword id="KW-0540">Nuclease</keyword>
<gene>
    <name evidence="1" type="primary">rnhA</name>
    <name type="ordered locus">lpl1334</name>
</gene>
<protein>
    <recommendedName>
        <fullName evidence="1">Ribonuclease H</fullName>
        <shortName evidence="1">RNase H</shortName>
        <ecNumber evidence="1">3.1.26.4</ecNumber>
    </recommendedName>
</protein>
<evidence type="ECO:0000255" key="1">
    <source>
        <dbReference type="HAMAP-Rule" id="MF_00042"/>
    </source>
</evidence>
<evidence type="ECO:0000255" key="2">
    <source>
        <dbReference type="PROSITE-ProRule" id="PRU00408"/>
    </source>
</evidence>
<proteinExistence type="inferred from homology"/>
<feature type="chain" id="PRO_0000332619" description="Ribonuclease H">
    <location>
        <begin position="1"/>
        <end position="143"/>
    </location>
</feature>
<feature type="domain" description="RNase H type-1" evidence="2">
    <location>
        <begin position="1"/>
        <end position="140"/>
    </location>
</feature>
<feature type="binding site" evidence="1">
    <location>
        <position position="8"/>
    </location>
    <ligand>
        <name>Mg(2+)</name>
        <dbReference type="ChEBI" id="CHEBI:18420"/>
        <label>1</label>
    </ligand>
</feature>
<feature type="binding site" evidence="1">
    <location>
        <position position="8"/>
    </location>
    <ligand>
        <name>Mg(2+)</name>
        <dbReference type="ChEBI" id="CHEBI:18420"/>
        <label>2</label>
    </ligand>
</feature>
<feature type="binding site" evidence="1">
    <location>
        <position position="46"/>
    </location>
    <ligand>
        <name>Mg(2+)</name>
        <dbReference type="ChEBI" id="CHEBI:18420"/>
        <label>1</label>
    </ligand>
</feature>
<feature type="binding site" evidence="1">
    <location>
        <position position="68"/>
    </location>
    <ligand>
        <name>Mg(2+)</name>
        <dbReference type="ChEBI" id="CHEBI:18420"/>
        <label>1</label>
    </ligand>
</feature>
<feature type="binding site" evidence="1">
    <location>
        <position position="132"/>
    </location>
    <ligand>
        <name>Mg(2+)</name>
        <dbReference type="ChEBI" id="CHEBI:18420"/>
        <label>2</label>
    </ligand>
</feature>
<comment type="function">
    <text evidence="1">Endonuclease that specifically degrades the RNA of RNA-DNA hybrids.</text>
</comment>
<comment type="catalytic activity">
    <reaction evidence="1">
        <text>Endonucleolytic cleavage to 5'-phosphomonoester.</text>
        <dbReference type="EC" id="3.1.26.4"/>
    </reaction>
</comment>
<comment type="cofactor">
    <cofactor evidence="1">
        <name>Mg(2+)</name>
        <dbReference type="ChEBI" id="CHEBI:18420"/>
    </cofactor>
    <text evidence="1">Binds 1 Mg(2+) ion per subunit. May bind a second metal ion at a regulatory site, or after substrate binding.</text>
</comment>
<comment type="subunit">
    <text evidence="1">Monomer.</text>
</comment>
<comment type="subcellular location">
    <subcellularLocation>
        <location evidence="1">Cytoplasm</location>
    </subcellularLocation>
</comment>
<comment type="similarity">
    <text evidence="1">Belongs to the RNase H family.</text>
</comment>
<sequence length="143" mass="16255">MKVEIYTDGACKGNPGPGGWGVLLRYNGREKTLHGGEPQTTNNRMELMAAIKGLEALKRPCEVDLYTDSQYLQQGMKEWIKTWKRNGWRNSKKELVKNAELWKSLDNLASIHNINWHWVKGHSGHLENDLVDALANLGIEELS</sequence>
<reference key="1">
    <citation type="journal article" date="2004" name="Nat. Genet.">
        <title>Evidence in the Legionella pneumophila genome for exploitation of host cell functions and high genome plasticity.</title>
        <authorList>
            <person name="Cazalet C."/>
            <person name="Rusniok C."/>
            <person name="Brueggemann H."/>
            <person name="Zidane N."/>
            <person name="Magnier A."/>
            <person name="Ma L."/>
            <person name="Tichit M."/>
            <person name="Jarraud S."/>
            <person name="Bouchier C."/>
            <person name="Vandenesch F."/>
            <person name="Kunst F."/>
            <person name="Etienne J."/>
            <person name="Glaser P."/>
            <person name="Buchrieser C."/>
        </authorList>
    </citation>
    <scope>NUCLEOTIDE SEQUENCE [LARGE SCALE GENOMIC DNA]</scope>
    <source>
        <strain>Lens</strain>
    </source>
</reference>
<name>RNH_LEGPL</name>